<keyword id="KW-1185">Reference proteome</keyword>
<protein>
    <recommendedName>
        <fullName>Uncharacterized protein 285L</fullName>
    </recommendedName>
</protein>
<sequence length="121" mass="14057">MDNKCTFSRKEDGVCEYKKNEVRTSQSEVPKTSIKKSDNGEKDEKEEKELNLENIIKKASANPQQRKNQKKYHRASSDCDSSDDEKDEPYYHGSKASTTLTREQALKLSLRKKIDERKLNK</sequence>
<reference key="1">
    <citation type="journal article" date="2001" name="Virology">
        <title>Analysis of the first complete DNA sequence of an invertebrate iridovirus: coding strategy of the genome of Chilo iridescent virus.</title>
        <authorList>
            <person name="Jakob N.J."/>
            <person name="Mueller K."/>
            <person name="Bahr U."/>
            <person name="Darai G."/>
        </authorList>
    </citation>
    <scope>NUCLEOTIDE SEQUENCE [LARGE SCALE GENOMIC DNA]</scope>
</reference>
<reference key="2">
    <citation type="journal article" date="2007" name="Virol. J.">
        <title>Comparative genomic analysis of the family Iridoviridae: re-annotating and defining the core set of iridovirus genes.</title>
        <authorList>
            <person name="Eaton H.E."/>
            <person name="Metcalf J."/>
            <person name="Penny E."/>
            <person name="Tcherepanov V."/>
            <person name="Upton C."/>
            <person name="Brunetti C.R."/>
        </authorList>
    </citation>
    <scope>GENOME REANNOTATION</scope>
</reference>
<name>285L_IIV6</name>
<dbReference type="EMBL" id="AF303741">
    <property type="protein sequence ID" value="AAK82146.1"/>
    <property type="molecule type" value="Genomic_DNA"/>
</dbReference>
<dbReference type="RefSeq" id="NP_149748.1">
    <property type="nucleotide sequence ID" value="NC_003038.1"/>
</dbReference>
<dbReference type="SMR" id="Q91FN9"/>
<dbReference type="KEGG" id="vg:1733415"/>
<dbReference type="Proteomes" id="UP000001359">
    <property type="component" value="Genome"/>
</dbReference>
<evidence type="ECO:0000256" key="1">
    <source>
        <dbReference type="SAM" id="MobiDB-lite"/>
    </source>
</evidence>
<organism>
    <name type="scientific">Invertebrate iridescent virus 6</name>
    <name type="common">IIV-6</name>
    <name type="synonym">Chilo iridescent virus</name>
    <dbReference type="NCBI Taxonomy" id="176652"/>
    <lineage>
        <taxon>Viruses</taxon>
        <taxon>Varidnaviria</taxon>
        <taxon>Bamfordvirae</taxon>
        <taxon>Nucleocytoviricota</taxon>
        <taxon>Megaviricetes</taxon>
        <taxon>Pimascovirales</taxon>
        <taxon>Iridoviridae</taxon>
        <taxon>Betairidovirinae</taxon>
        <taxon>Iridovirus</taxon>
    </lineage>
</organism>
<gene>
    <name type="ORF">IIV6-285L</name>
</gene>
<feature type="chain" id="PRO_0000377842" description="Uncharacterized protein 285L">
    <location>
        <begin position="1"/>
        <end position="121"/>
    </location>
</feature>
<feature type="region of interest" description="Disordered" evidence="1">
    <location>
        <begin position="20"/>
        <end position="98"/>
    </location>
</feature>
<feature type="compositionally biased region" description="Basic and acidic residues" evidence="1">
    <location>
        <begin position="35"/>
        <end position="51"/>
    </location>
</feature>
<organismHost>
    <name type="scientific">Acheta domesticus</name>
    <name type="common">House cricket</name>
    <dbReference type="NCBI Taxonomy" id="6997"/>
</organismHost>
<organismHost>
    <name type="scientific">Chilo suppressalis</name>
    <name type="common">Asiatic rice borer moth</name>
    <dbReference type="NCBI Taxonomy" id="168631"/>
</organismHost>
<organismHost>
    <name type="scientific">Gryllus bimaculatus</name>
    <name type="common">Two-spotted cricket</name>
    <dbReference type="NCBI Taxonomy" id="6999"/>
</organismHost>
<organismHost>
    <name type="scientific">Gryllus campestris</name>
    <dbReference type="NCBI Taxonomy" id="58607"/>
</organismHost>
<organismHost>
    <name type="scientific">Spodoptera frugiperda</name>
    <name type="common">Fall armyworm</name>
    <dbReference type="NCBI Taxonomy" id="7108"/>
</organismHost>
<accession>Q91FN9</accession>
<proteinExistence type="predicted"/>